<organism evidence="8">
    <name type="scientific">Caenorhabditis elegans</name>
    <dbReference type="NCBI Taxonomy" id="6239"/>
    <lineage>
        <taxon>Eukaryota</taxon>
        <taxon>Metazoa</taxon>
        <taxon>Ecdysozoa</taxon>
        <taxon>Nematoda</taxon>
        <taxon>Chromadorea</taxon>
        <taxon>Rhabditida</taxon>
        <taxon>Rhabditina</taxon>
        <taxon>Rhabditomorpha</taxon>
        <taxon>Rhabditoidea</taxon>
        <taxon>Rhabditidae</taxon>
        <taxon>Peloderinae</taxon>
        <taxon>Caenorhabditis</taxon>
    </lineage>
</organism>
<accession>O45767</accession>
<protein>
    <recommendedName>
        <fullName evidence="6">Serpentine receptor class X-43</fullName>
        <shortName evidence="6">Protein srx-43</shortName>
    </recommendedName>
</protein>
<name>SRX43_CAEEL</name>
<proteinExistence type="evidence at transcript level"/>
<sequence length="319" mass="35881">MVLRNLTAMAIYDQTFVYSSDDALAGMVVSMECLTGLFLLVAVIIGCFRIAALKSPFGILMINQNCAQLMACINSGSFSTLGVLLNIKPVLSISYLFGNFSIFLLPVILISFLLMSFNRFCACFFPLRYQNLFSSSMIRTFIVFNWLLSLVAGSYLVVVRECNFVFYHFGWLFAGSVSVKCGTLLSLYSISIQTVLSITIVGLDVVTLVALMAFRSKVYQSHSVEVRRRELSFSGQVIIQGAVFLCHGAWYDMGHAILPGNDDRWKFFFTTSFSSNLLHVFDPVVVFAFNKEFRRWLFRNFNVPTAQKRIVTVVSAHNT</sequence>
<dbReference type="EMBL" id="BX284605">
    <property type="protein sequence ID" value="CAB07660.2"/>
    <property type="molecule type" value="Genomic_DNA"/>
</dbReference>
<dbReference type="PIR" id="T24794">
    <property type="entry name" value="T24794"/>
</dbReference>
<dbReference type="RefSeq" id="NP_507022.2">
    <property type="nucleotide sequence ID" value="NM_074621.3"/>
</dbReference>
<dbReference type="SMR" id="O45767"/>
<dbReference type="FunCoup" id="O45767">
    <property type="interactions" value="1"/>
</dbReference>
<dbReference type="STRING" id="6239.T10C6.3.1"/>
<dbReference type="PaxDb" id="6239-T10C6.3"/>
<dbReference type="EnsemblMetazoa" id="T10C6.3.1">
    <property type="protein sequence ID" value="T10C6.3.1"/>
    <property type="gene ID" value="WBGene00005934"/>
</dbReference>
<dbReference type="GeneID" id="188374"/>
<dbReference type="KEGG" id="cel:CELE_T10C6.3"/>
<dbReference type="UCSC" id="T10C6.3">
    <property type="organism name" value="c. elegans"/>
</dbReference>
<dbReference type="AGR" id="WB:WBGene00005934"/>
<dbReference type="CTD" id="188374"/>
<dbReference type="WormBase" id="T10C6.3">
    <property type="protein sequence ID" value="CE36322"/>
    <property type="gene ID" value="WBGene00005934"/>
    <property type="gene designation" value="srx-43"/>
</dbReference>
<dbReference type="eggNOG" id="ENOG502TH26">
    <property type="taxonomic scope" value="Eukaryota"/>
</dbReference>
<dbReference type="GeneTree" id="ENSGT00970000195834"/>
<dbReference type="HOGENOM" id="CLU_059630_3_1_1"/>
<dbReference type="InParanoid" id="O45767"/>
<dbReference type="OMA" id="ILMINQN"/>
<dbReference type="OrthoDB" id="5790757at2759"/>
<dbReference type="PhylomeDB" id="O45767"/>
<dbReference type="PRO" id="PR:O45767"/>
<dbReference type="Proteomes" id="UP000001940">
    <property type="component" value="Chromosome V"/>
</dbReference>
<dbReference type="GO" id="GO:0097730">
    <property type="term" value="C:non-motile cilium"/>
    <property type="evidence" value="ECO:0000314"/>
    <property type="project" value="UniProtKB"/>
</dbReference>
<dbReference type="GO" id="GO:0043204">
    <property type="term" value="C:perikaryon"/>
    <property type="evidence" value="ECO:0000314"/>
    <property type="project" value="UniProtKB"/>
</dbReference>
<dbReference type="GO" id="GO:0005886">
    <property type="term" value="C:plasma membrane"/>
    <property type="evidence" value="ECO:0007669"/>
    <property type="project" value="UniProtKB-SubCell"/>
</dbReference>
<dbReference type="GO" id="GO:0016503">
    <property type="term" value="F:pheromone receptor activity"/>
    <property type="evidence" value="ECO:0000315"/>
    <property type="project" value="UniProtKB"/>
</dbReference>
<dbReference type="GO" id="GO:0019722">
    <property type="term" value="P:calcium-mediated signaling"/>
    <property type="evidence" value="ECO:0000315"/>
    <property type="project" value="UniProtKB"/>
</dbReference>
<dbReference type="GO" id="GO:0071444">
    <property type="term" value="P:cellular response to pheromone"/>
    <property type="evidence" value="ECO:0000315"/>
    <property type="project" value="UniProtKB"/>
</dbReference>
<dbReference type="GO" id="GO:0035641">
    <property type="term" value="P:locomotory exploration behavior"/>
    <property type="evidence" value="ECO:0000315"/>
    <property type="project" value="UniProtKB"/>
</dbReference>
<dbReference type="CDD" id="cd00637">
    <property type="entry name" value="7tm_classA_rhodopsin-like"/>
    <property type="match status" value="1"/>
</dbReference>
<dbReference type="Gene3D" id="1.20.1070.10">
    <property type="entry name" value="Rhodopsin 7-helix transmembrane proteins"/>
    <property type="match status" value="1"/>
</dbReference>
<dbReference type="InterPro" id="IPR019430">
    <property type="entry name" value="7TM_GPCR_serpentine_rcpt_Srx"/>
</dbReference>
<dbReference type="InterPro" id="IPR017452">
    <property type="entry name" value="GPCR_Rhodpsn_7TM"/>
</dbReference>
<dbReference type="PANTHER" id="PTHR23017:SF24">
    <property type="entry name" value="7TM GPCR SERPENTINE RECEPTOR CLASS X (SRX) DOMAIN-CONTAINING PROTEIN-RELATED"/>
    <property type="match status" value="1"/>
</dbReference>
<dbReference type="PANTHER" id="PTHR23017">
    <property type="entry name" value="SERPENTINE RECEPTOR, CLASS X"/>
    <property type="match status" value="1"/>
</dbReference>
<dbReference type="Pfam" id="PF10328">
    <property type="entry name" value="7TM_GPCR_Srx"/>
    <property type="match status" value="1"/>
</dbReference>
<dbReference type="SUPFAM" id="SSF81321">
    <property type="entry name" value="Family A G protein-coupled receptor-like"/>
    <property type="match status" value="1"/>
</dbReference>
<dbReference type="PROSITE" id="PS50262">
    <property type="entry name" value="G_PROTEIN_RECEP_F1_2"/>
    <property type="match status" value="1"/>
</dbReference>
<keyword id="KW-1003">Cell membrane</keyword>
<keyword id="KW-0966">Cell projection</keyword>
<keyword id="KW-0297">G-protein coupled receptor</keyword>
<keyword id="KW-0472">Membrane</keyword>
<keyword id="KW-0675">Receptor</keyword>
<keyword id="KW-1185">Reference proteome</keyword>
<keyword id="KW-0807">Transducer</keyword>
<keyword id="KW-0812">Transmembrane</keyword>
<keyword id="KW-1133">Transmembrane helix</keyword>
<evidence type="ECO:0000255" key="1"/>
<evidence type="ECO:0000255" key="2">
    <source>
        <dbReference type="PROSITE-ProRule" id="PRU00521"/>
    </source>
</evidence>
<evidence type="ECO:0000269" key="3">
    <source>
    </source>
</evidence>
<evidence type="ECO:0000269" key="4">
    <source>
    </source>
</evidence>
<evidence type="ECO:0000303" key="5">
    <source>
    </source>
</evidence>
<evidence type="ECO:0000305" key="6"/>
<evidence type="ECO:0000305" key="7">
    <source>
    </source>
</evidence>
<evidence type="ECO:0000312" key="8">
    <source>
        <dbReference type="Proteomes" id="UP000001940"/>
    </source>
</evidence>
<evidence type="ECO:0000312" key="9">
    <source>
        <dbReference type="WormBase" id="T10C6.3"/>
    </source>
</evidence>
<feature type="chain" id="PRO_0000438975" description="Serpentine receptor class X-43" evidence="6">
    <location>
        <begin position="1"/>
        <end position="319"/>
    </location>
</feature>
<feature type="transmembrane region" description="Helical; Name=1" evidence="1">
    <location>
        <begin position="28"/>
        <end position="48"/>
    </location>
</feature>
<feature type="transmembrane region" description="Helical; Name=2" evidence="1">
    <location>
        <begin position="67"/>
        <end position="87"/>
    </location>
</feature>
<feature type="transmembrane region" description="Helical; Name=3" evidence="1">
    <location>
        <begin position="95"/>
        <end position="115"/>
    </location>
</feature>
<feature type="transmembrane region" description="Helical; Name=4" evidence="1">
    <location>
        <begin position="138"/>
        <end position="158"/>
    </location>
</feature>
<feature type="transmembrane region" description="Helical; Name=5" evidence="1">
    <location>
        <begin position="164"/>
        <end position="184"/>
    </location>
</feature>
<feature type="transmembrane region" description="Helical; Name=6" evidence="1">
    <location>
        <begin position="194"/>
        <end position="214"/>
    </location>
</feature>
<feature type="transmembrane region" description="Helical; Name=7" evidence="1">
    <location>
        <begin position="267"/>
        <end position="287"/>
    </location>
</feature>
<comment type="function">
    <text evidence="3 4">Receptor for the ascaroside pheromone icas#9 which suppresses exploratory forgaging behavior. In response to ascaroside icas#9, may furthermore play a role in the expression of genes in the TGF-beta signaling pathway, such as daf-7, and in insulin signaling pathway, such as daf-28, which may in turn contribute to exploratory behavior.</text>
</comment>
<comment type="subcellular location">
    <subcellularLocation>
        <location evidence="7">Cell membrane</location>
        <topology evidence="1">Multi-pass membrane protein</topology>
    </subcellularLocation>
    <subcellularLocation>
        <location evidence="3">Perikaryon</location>
    </subcellularLocation>
    <subcellularLocation>
        <location evidence="3">Cell projection</location>
        <location evidence="3">Cilium</location>
    </subcellularLocation>
</comment>
<comment type="tissue specificity">
    <text evidence="3">Expressed in ASI sensory neurons.</text>
</comment>
<comment type="disruption phenotype">
    <text evidence="4">Insensitivity to ascaroside pheromones.</text>
</comment>
<comment type="similarity">
    <text evidence="2">Belongs to the G-protein coupled receptor 1 family.</text>
</comment>
<reference evidence="8" key="1">
    <citation type="journal article" date="1998" name="Science">
        <title>Genome sequence of the nematode C. elegans: a platform for investigating biology.</title>
        <authorList>
            <consortium name="The C. elegans sequencing consortium"/>
        </authorList>
    </citation>
    <scope>NUCLEOTIDE SEQUENCE [LARGE SCALE GENOMIC DNA]</scope>
    <source>
        <strain evidence="8">Bristol N2</strain>
    </source>
</reference>
<reference evidence="6" key="2">
    <citation type="journal article" date="2016" name="Elife">
        <title>Regulatory changes in two chemoreceptor genes contribute to a Caenorhabditis elegans QTL for foraging behavior.</title>
        <authorList>
            <person name="Greene J.S."/>
            <person name="Dobosiewicz M."/>
            <person name="Butcher R.A."/>
            <person name="McGrath P.T."/>
            <person name="Bargmann C.I."/>
        </authorList>
    </citation>
    <scope>FUNCTION</scope>
    <scope>DISRUPTION PHENOTYPE</scope>
</reference>
<reference evidence="6" key="3">
    <citation type="journal article" date="2016" name="Nature">
        <title>Balancing selection shapes density-dependent foraging behaviour.</title>
        <authorList>
            <person name="Greene J.S."/>
            <person name="Brown M."/>
            <person name="Dobosiewicz M."/>
            <person name="Ishida I.G."/>
            <person name="Macosko E.Z."/>
            <person name="Zhang X."/>
            <person name="Butcher R.A."/>
            <person name="Cline D.J."/>
            <person name="McGrath P.T."/>
            <person name="Bargmann C.I."/>
        </authorList>
    </citation>
    <scope>FUNCTION</scope>
    <scope>SUBCELLULAR LOCATION</scope>
    <scope>TISSUE SPECIFICITY</scope>
</reference>
<gene>
    <name evidence="5 9" type="primary">srx-43</name>
    <name evidence="9" type="ORF">T10C6.3</name>
</gene>